<accession>C1KVF0</accession>
<dbReference type="EMBL" id="FM242711">
    <property type="protein sequence ID" value="CAS05275.1"/>
    <property type="molecule type" value="Genomic_DNA"/>
</dbReference>
<dbReference type="SMR" id="C1KVF0"/>
<dbReference type="KEGG" id="lmc:Lm4b_01513"/>
<dbReference type="HOGENOM" id="CLU_162466_0_0_9"/>
<dbReference type="HAMAP" id="MF_01507">
    <property type="entry name" value="UPF0297"/>
    <property type="match status" value="1"/>
</dbReference>
<dbReference type="InterPro" id="IPR009309">
    <property type="entry name" value="IreB"/>
</dbReference>
<dbReference type="NCBIfam" id="NF003997">
    <property type="entry name" value="PRK05473.1"/>
    <property type="match status" value="1"/>
</dbReference>
<dbReference type="PANTHER" id="PTHR40067">
    <property type="entry name" value="UPF0297 PROTEIN YRZL"/>
    <property type="match status" value="1"/>
</dbReference>
<dbReference type="PANTHER" id="PTHR40067:SF1">
    <property type="entry name" value="UPF0297 PROTEIN YRZL"/>
    <property type="match status" value="1"/>
</dbReference>
<dbReference type="Pfam" id="PF06135">
    <property type="entry name" value="IreB"/>
    <property type="match status" value="1"/>
</dbReference>
<dbReference type="PIRSF" id="PIRSF037258">
    <property type="entry name" value="DUF965_bac"/>
    <property type="match status" value="1"/>
</dbReference>
<proteinExistence type="inferred from homology"/>
<feature type="chain" id="PRO_1000215337" description="UPF0297 protein Lm4b_01513">
    <location>
        <begin position="1"/>
        <end position="90"/>
    </location>
</feature>
<sequence>MDSKDQTMFYNFGDDSIEEDVKKLMKQVYVALEEKGYNPVNQIVGYLLSGDPAYIPRHKDARSMIRRLERDEIIEELVKAYLKNNEIGEK</sequence>
<protein>
    <recommendedName>
        <fullName evidence="1">UPF0297 protein Lm4b_01513</fullName>
    </recommendedName>
</protein>
<comment type="similarity">
    <text evidence="1">Belongs to the UPF0297 family.</text>
</comment>
<evidence type="ECO:0000255" key="1">
    <source>
        <dbReference type="HAMAP-Rule" id="MF_01507"/>
    </source>
</evidence>
<gene>
    <name type="ordered locus">Lm4b_01513</name>
</gene>
<name>Y1513_LISMC</name>
<organism>
    <name type="scientific">Listeria monocytogenes serotype 4b (strain CLIP80459)</name>
    <dbReference type="NCBI Taxonomy" id="568819"/>
    <lineage>
        <taxon>Bacteria</taxon>
        <taxon>Bacillati</taxon>
        <taxon>Bacillota</taxon>
        <taxon>Bacilli</taxon>
        <taxon>Bacillales</taxon>
        <taxon>Listeriaceae</taxon>
        <taxon>Listeria</taxon>
    </lineage>
</organism>
<reference key="1">
    <citation type="journal article" date="2012" name="BMC Genomics">
        <title>Comparative genomics and transcriptomics of lineages I, II, and III strains of Listeria monocytogenes.</title>
        <authorList>
            <person name="Hain T."/>
            <person name="Ghai R."/>
            <person name="Billion A."/>
            <person name="Kuenne C.T."/>
            <person name="Steinweg C."/>
            <person name="Izar B."/>
            <person name="Mohamed W."/>
            <person name="Mraheil M."/>
            <person name="Domann E."/>
            <person name="Schaffrath S."/>
            <person name="Karst U."/>
            <person name="Goesmann A."/>
            <person name="Oehm S."/>
            <person name="Puhler A."/>
            <person name="Merkl R."/>
            <person name="Vorwerk S."/>
            <person name="Glaser P."/>
            <person name="Garrido P."/>
            <person name="Rusniok C."/>
            <person name="Buchrieser C."/>
            <person name="Goebel W."/>
            <person name="Chakraborty T."/>
        </authorList>
    </citation>
    <scope>NUCLEOTIDE SEQUENCE [LARGE SCALE GENOMIC DNA]</scope>
    <source>
        <strain>CLIP80459</strain>
    </source>
</reference>